<name>RK2_CUSRE</name>
<gene>
    <name type="primary">rpl2</name>
</gene>
<evidence type="ECO:0000250" key="1"/>
<evidence type="ECO:0000255" key="2">
    <source>
        <dbReference type="HAMAP-Rule" id="MF_01320"/>
    </source>
</evidence>
<evidence type="ECO:0000256" key="3">
    <source>
        <dbReference type="SAM" id="MobiDB-lite"/>
    </source>
</evidence>
<evidence type="ECO:0000305" key="4"/>
<proteinExistence type="inferred from homology"/>
<dbReference type="EMBL" id="AM711640">
    <property type="protein sequence ID" value="CAM98432.1"/>
    <property type="molecule type" value="Genomic_DNA"/>
</dbReference>
<dbReference type="RefSeq" id="YP_001430145.1">
    <property type="nucleotide sequence ID" value="NC_009766.1"/>
</dbReference>
<dbReference type="SMR" id="A7M9A4"/>
<dbReference type="GeneID" id="5536651"/>
<dbReference type="GO" id="GO:0005762">
    <property type="term" value="C:mitochondrial large ribosomal subunit"/>
    <property type="evidence" value="ECO:0007669"/>
    <property type="project" value="TreeGrafter"/>
</dbReference>
<dbReference type="GO" id="GO:0009536">
    <property type="term" value="C:plastid"/>
    <property type="evidence" value="ECO:0007669"/>
    <property type="project" value="UniProtKB-SubCell"/>
</dbReference>
<dbReference type="GO" id="GO:0003723">
    <property type="term" value="F:RNA binding"/>
    <property type="evidence" value="ECO:0007669"/>
    <property type="project" value="InterPro"/>
</dbReference>
<dbReference type="GO" id="GO:0003735">
    <property type="term" value="F:structural constituent of ribosome"/>
    <property type="evidence" value="ECO:0007669"/>
    <property type="project" value="InterPro"/>
</dbReference>
<dbReference type="GO" id="GO:0016740">
    <property type="term" value="F:transferase activity"/>
    <property type="evidence" value="ECO:0007669"/>
    <property type="project" value="InterPro"/>
</dbReference>
<dbReference type="GO" id="GO:0032543">
    <property type="term" value="P:mitochondrial translation"/>
    <property type="evidence" value="ECO:0007669"/>
    <property type="project" value="TreeGrafter"/>
</dbReference>
<dbReference type="FunFam" id="4.10.950.10:FF:000001">
    <property type="entry name" value="50S ribosomal protein L2"/>
    <property type="match status" value="1"/>
</dbReference>
<dbReference type="FunFam" id="2.30.30.30:FF:000008">
    <property type="entry name" value="50S ribosomal protein L2, chloroplastic"/>
    <property type="match status" value="1"/>
</dbReference>
<dbReference type="FunFam" id="2.40.50.140:FF:000029">
    <property type="entry name" value="50S ribosomal protein L2, chloroplastic"/>
    <property type="match status" value="1"/>
</dbReference>
<dbReference type="Gene3D" id="2.30.30.30">
    <property type="match status" value="1"/>
</dbReference>
<dbReference type="Gene3D" id="2.40.50.140">
    <property type="entry name" value="Nucleic acid-binding proteins"/>
    <property type="match status" value="1"/>
</dbReference>
<dbReference type="Gene3D" id="4.10.950.10">
    <property type="entry name" value="Ribosomal protein L2, domain 3"/>
    <property type="match status" value="1"/>
</dbReference>
<dbReference type="HAMAP" id="MF_01320_B">
    <property type="entry name" value="Ribosomal_uL2_B"/>
    <property type="match status" value="1"/>
</dbReference>
<dbReference type="InterPro" id="IPR012340">
    <property type="entry name" value="NA-bd_OB-fold"/>
</dbReference>
<dbReference type="InterPro" id="IPR014722">
    <property type="entry name" value="Rib_uL2_dom2"/>
</dbReference>
<dbReference type="InterPro" id="IPR002171">
    <property type="entry name" value="Ribosomal_uL2"/>
</dbReference>
<dbReference type="InterPro" id="IPR005880">
    <property type="entry name" value="Ribosomal_uL2_bac/org-type"/>
</dbReference>
<dbReference type="InterPro" id="IPR022669">
    <property type="entry name" value="Ribosomal_uL2_C"/>
</dbReference>
<dbReference type="InterPro" id="IPR022671">
    <property type="entry name" value="Ribosomal_uL2_CS"/>
</dbReference>
<dbReference type="InterPro" id="IPR014726">
    <property type="entry name" value="Ribosomal_uL2_dom3"/>
</dbReference>
<dbReference type="InterPro" id="IPR022666">
    <property type="entry name" value="Ribosomal_uL2_RNA-bd_dom"/>
</dbReference>
<dbReference type="InterPro" id="IPR008991">
    <property type="entry name" value="Translation_prot_SH3-like_sf"/>
</dbReference>
<dbReference type="NCBIfam" id="TIGR01171">
    <property type="entry name" value="rplB_bact"/>
    <property type="match status" value="1"/>
</dbReference>
<dbReference type="PANTHER" id="PTHR13691:SF5">
    <property type="entry name" value="LARGE RIBOSOMAL SUBUNIT PROTEIN UL2M"/>
    <property type="match status" value="1"/>
</dbReference>
<dbReference type="PANTHER" id="PTHR13691">
    <property type="entry name" value="RIBOSOMAL PROTEIN L2"/>
    <property type="match status" value="1"/>
</dbReference>
<dbReference type="Pfam" id="PF00181">
    <property type="entry name" value="Ribosomal_L2"/>
    <property type="match status" value="1"/>
</dbReference>
<dbReference type="Pfam" id="PF03947">
    <property type="entry name" value="Ribosomal_L2_C"/>
    <property type="match status" value="1"/>
</dbReference>
<dbReference type="PIRSF" id="PIRSF002158">
    <property type="entry name" value="Ribosomal_L2"/>
    <property type="match status" value="1"/>
</dbReference>
<dbReference type="SMART" id="SM01383">
    <property type="entry name" value="Ribosomal_L2"/>
    <property type="match status" value="1"/>
</dbReference>
<dbReference type="SMART" id="SM01382">
    <property type="entry name" value="Ribosomal_L2_C"/>
    <property type="match status" value="1"/>
</dbReference>
<dbReference type="SUPFAM" id="SSF50249">
    <property type="entry name" value="Nucleic acid-binding proteins"/>
    <property type="match status" value="1"/>
</dbReference>
<dbReference type="SUPFAM" id="SSF50104">
    <property type="entry name" value="Translation proteins SH3-like domain"/>
    <property type="match status" value="1"/>
</dbReference>
<dbReference type="PROSITE" id="PS00467">
    <property type="entry name" value="RIBOSOMAL_L2"/>
    <property type="match status" value="1"/>
</dbReference>
<organism>
    <name type="scientific">Cuscuta reflexa</name>
    <name type="common">Southern Asian dodder</name>
    <dbReference type="NCBI Taxonomy" id="4129"/>
    <lineage>
        <taxon>Eukaryota</taxon>
        <taxon>Viridiplantae</taxon>
        <taxon>Streptophyta</taxon>
        <taxon>Embryophyta</taxon>
        <taxon>Tracheophyta</taxon>
        <taxon>Spermatophyta</taxon>
        <taxon>Magnoliopsida</taxon>
        <taxon>eudicotyledons</taxon>
        <taxon>Gunneridae</taxon>
        <taxon>Pentapetalae</taxon>
        <taxon>asterids</taxon>
        <taxon>lamiids</taxon>
        <taxon>Solanales</taxon>
        <taxon>Convolvulaceae</taxon>
        <taxon>Cuscuteae</taxon>
        <taxon>Cuscuta</taxon>
        <taxon>Cuscuta subgen. Monogynella</taxon>
    </lineage>
</organism>
<reference key="1">
    <citation type="journal article" date="2007" name="BMC Plant Biol.">
        <title>Complete DNA sequences of the plastid genomes of two parasitic flowering plant species, Cuscuta reflexa and Cuscuta gronovii.</title>
        <authorList>
            <person name="Funk H.T."/>
            <person name="Berg S."/>
            <person name="Krupinska K."/>
            <person name="Maier U.-G."/>
            <person name="Krause K."/>
        </authorList>
    </citation>
    <scope>NUCLEOTIDE SEQUENCE [LARGE SCALE GENOMIC DNA]</scope>
</reference>
<geneLocation type="plastid"/>
<feature type="chain" id="PRO_0000310073" description="Large ribosomal subunit protein uL2c">
    <location>
        <begin position="1"/>
        <end position="275"/>
    </location>
</feature>
<feature type="region of interest" description="Disordered" evidence="3">
    <location>
        <begin position="225"/>
        <end position="249"/>
    </location>
</feature>
<sequence>MVIKLYKNYAPSTHNGTLKGQVKSARGKNLISGKHRCGKGRNARGIITARHRGGGHKRLYRKIDFWRNKKNIYGRIVTIEYDPNRNAHICLIHYRNGEKRYILHPRGAIIGDTIVSGTEVSIKIGNALPLTEMPLGTAIHNLEITRGKGGQLARAAGAVAKLIAKEGKSATLKLPSGEVRLISKSCSATVGQVGNVGVNQKSLGRAGAQRWLGKRPVVRGVVMNPVDHPHGGGEGRAPIGRKKPTTPWGYPALGRKTRKVNKYSEKFIIRHRRKQ</sequence>
<keyword id="KW-0934">Plastid</keyword>
<keyword id="KW-0687">Ribonucleoprotein</keyword>
<keyword id="KW-0689">Ribosomal protein</keyword>
<protein>
    <recommendedName>
        <fullName evidence="2">Large ribosomal subunit protein uL2c</fullName>
    </recommendedName>
    <alternativeName>
        <fullName evidence="4">50S ribosomal protein L2, plastid</fullName>
    </alternativeName>
</protein>
<accession>A7M9A4</accession>
<comment type="subunit">
    <text evidence="1">Part of the 50S ribosomal subunit.</text>
</comment>
<comment type="subcellular location">
    <subcellularLocation>
        <location>Plastid</location>
    </subcellularLocation>
</comment>
<comment type="similarity">
    <text evidence="4">Belongs to the universal ribosomal protein uL2 family.</text>
</comment>
<comment type="caution">
    <text evidence="4">Young tissue from this organism is photosynthetic and contains some thylakoids, although the photosynthetic activity does not exceed the light compensation point.</text>
</comment>